<reference key="1">
    <citation type="journal article" date="2006" name="J. Bacteriol.">
        <title>Pathogenomic sequence analysis of Bacillus cereus and Bacillus thuringiensis isolates closely related to Bacillus anthracis.</title>
        <authorList>
            <person name="Han C.S."/>
            <person name="Xie G."/>
            <person name="Challacombe J.F."/>
            <person name="Altherr M.R."/>
            <person name="Bhotika S.S."/>
            <person name="Bruce D."/>
            <person name="Campbell C.S."/>
            <person name="Campbell M.L."/>
            <person name="Chen J."/>
            <person name="Chertkov O."/>
            <person name="Cleland C."/>
            <person name="Dimitrijevic M."/>
            <person name="Doggett N.A."/>
            <person name="Fawcett J.J."/>
            <person name="Glavina T."/>
            <person name="Goodwin L.A."/>
            <person name="Hill K.K."/>
            <person name="Hitchcock P."/>
            <person name="Jackson P.J."/>
            <person name="Keim P."/>
            <person name="Kewalramani A.R."/>
            <person name="Longmire J."/>
            <person name="Lucas S."/>
            <person name="Malfatti S."/>
            <person name="McMurry K."/>
            <person name="Meincke L.J."/>
            <person name="Misra M."/>
            <person name="Moseman B.L."/>
            <person name="Mundt M."/>
            <person name="Munk A.C."/>
            <person name="Okinaka R.T."/>
            <person name="Parson-Quintana B."/>
            <person name="Reilly L.P."/>
            <person name="Richardson P."/>
            <person name="Robinson D.L."/>
            <person name="Rubin E."/>
            <person name="Saunders E."/>
            <person name="Tapia R."/>
            <person name="Tesmer J.G."/>
            <person name="Thayer N."/>
            <person name="Thompson L.S."/>
            <person name="Tice H."/>
            <person name="Ticknor L.O."/>
            <person name="Wills P.L."/>
            <person name="Brettin T.S."/>
            <person name="Gilna P."/>
        </authorList>
    </citation>
    <scope>NUCLEOTIDE SEQUENCE [LARGE SCALE GENOMIC DNA]</scope>
    <source>
        <strain>97-27</strain>
    </source>
</reference>
<sequence length="96" mass="10866">MSRISVENVKHVAHLARLAITDQEAEKFQKQLDAIVTFAEQLNELDTTDVKPTTHVLTMKNVMREDVPEKGLPVEEVLKNAPDHKDNQIRVPAVLE</sequence>
<gene>
    <name evidence="1" type="primary">gatC</name>
    <name type="ordered locus">BT9727_0288</name>
</gene>
<comment type="function">
    <text evidence="1">Allows the formation of correctly charged Asn-tRNA(Asn) or Gln-tRNA(Gln) through the transamidation of misacylated Asp-tRNA(Asn) or Glu-tRNA(Gln) in organisms which lack either or both of asparaginyl-tRNA or glutaminyl-tRNA synthetases. The reaction takes place in the presence of glutamine and ATP through an activated phospho-Asp-tRNA(Asn) or phospho-Glu-tRNA(Gln).</text>
</comment>
<comment type="catalytic activity">
    <reaction evidence="1">
        <text>L-glutamyl-tRNA(Gln) + L-glutamine + ATP + H2O = L-glutaminyl-tRNA(Gln) + L-glutamate + ADP + phosphate + H(+)</text>
        <dbReference type="Rhea" id="RHEA:17521"/>
        <dbReference type="Rhea" id="RHEA-COMP:9681"/>
        <dbReference type="Rhea" id="RHEA-COMP:9684"/>
        <dbReference type="ChEBI" id="CHEBI:15377"/>
        <dbReference type="ChEBI" id="CHEBI:15378"/>
        <dbReference type="ChEBI" id="CHEBI:29985"/>
        <dbReference type="ChEBI" id="CHEBI:30616"/>
        <dbReference type="ChEBI" id="CHEBI:43474"/>
        <dbReference type="ChEBI" id="CHEBI:58359"/>
        <dbReference type="ChEBI" id="CHEBI:78520"/>
        <dbReference type="ChEBI" id="CHEBI:78521"/>
        <dbReference type="ChEBI" id="CHEBI:456216"/>
    </reaction>
</comment>
<comment type="catalytic activity">
    <reaction evidence="1">
        <text>L-aspartyl-tRNA(Asn) + L-glutamine + ATP + H2O = L-asparaginyl-tRNA(Asn) + L-glutamate + ADP + phosphate + 2 H(+)</text>
        <dbReference type="Rhea" id="RHEA:14513"/>
        <dbReference type="Rhea" id="RHEA-COMP:9674"/>
        <dbReference type="Rhea" id="RHEA-COMP:9677"/>
        <dbReference type="ChEBI" id="CHEBI:15377"/>
        <dbReference type="ChEBI" id="CHEBI:15378"/>
        <dbReference type="ChEBI" id="CHEBI:29985"/>
        <dbReference type="ChEBI" id="CHEBI:30616"/>
        <dbReference type="ChEBI" id="CHEBI:43474"/>
        <dbReference type="ChEBI" id="CHEBI:58359"/>
        <dbReference type="ChEBI" id="CHEBI:78515"/>
        <dbReference type="ChEBI" id="CHEBI:78516"/>
        <dbReference type="ChEBI" id="CHEBI:456216"/>
    </reaction>
</comment>
<comment type="subunit">
    <text evidence="1">Heterotrimer of A, B and C subunits.</text>
</comment>
<comment type="similarity">
    <text evidence="1">Belongs to the GatC family.</text>
</comment>
<dbReference type="EC" id="6.3.5.-" evidence="1"/>
<dbReference type="EMBL" id="AE017355">
    <property type="protein sequence ID" value="AAT61266.1"/>
    <property type="molecule type" value="Genomic_DNA"/>
</dbReference>
<dbReference type="RefSeq" id="WP_000086999.1">
    <property type="nucleotide sequence ID" value="NC_005957.1"/>
</dbReference>
<dbReference type="RefSeq" id="YP_034638.1">
    <property type="nucleotide sequence ID" value="NC_005957.1"/>
</dbReference>
<dbReference type="SMR" id="Q6HP82"/>
<dbReference type="GeneID" id="93010705"/>
<dbReference type="KEGG" id="btk:BT9727_0288"/>
<dbReference type="PATRIC" id="fig|281309.8.peg.308"/>
<dbReference type="HOGENOM" id="CLU_105899_6_1_9"/>
<dbReference type="PRO" id="PR:Q6HP82"/>
<dbReference type="Proteomes" id="UP000001301">
    <property type="component" value="Chromosome"/>
</dbReference>
<dbReference type="GO" id="GO:0050566">
    <property type="term" value="F:asparaginyl-tRNA synthase (glutamine-hydrolyzing) activity"/>
    <property type="evidence" value="ECO:0007669"/>
    <property type="project" value="RHEA"/>
</dbReference>
<dbReference type="GO" id="GO:0005524">
    <property type="term" value="F:ATP binding"/>
    <property type="evidence" value="ECO:0007669"/>
    <property type="project" value="UniProtKB-KW"/>
</dbReference>
<dbReference type="GO" id="GO:0050567">
    <property type="term" value="F:glutaminyl-tRNA synthase (glutamine-hydrolyzing) activity"/>
    <property type="evidence" value="ECO:0007669"/>
    <property type="project" value="UniProtKB-UniRule"/>
</dbReference>
<dbReference type="GO" id="GO:0070681">
    <property type="term" value="P:glutaminyl-tRNAGln biosynthesis via transamidation"/>
    <property type="evidence" value="ECO:0007669"/>
    <property type="project" value="TreeGrafter"/>
</dbReference>
<dbReference type="GO" id="GO:0006450">
    <property type="term" value="P:regulation of translational fidelity"/>
    <property type="evidence" value="ECO:0007669"/>
    <property type="project" value="InterPro"/>
</dbReference>
<dbReference type="GO" id="GO:0006412">
    <property type="term" value="P:translation"/>
    <property type="evidence" value="ECO:0007669"/>
    <property type="project" value="UniProtKB-UniRule"/>
</dbReference>
<dbReference type="Gene3D" id="1.10.20.60">
    <property type="entry name" value="Glu-tRNAGln amidotransferase C subunit, N-terminal domain"/>
    <property type="match status" value="1"/>
</dbReference>
<dbReference type="HAMAP" id="MF_00122">
    <property type="entry name" value="GatC"/>
    <property type="match status" value="1"/>
</dbReference>
<dbReference type="InterPro" id="IPR036113">
    <property type="entry name" value="Asp/Glu-ADT_sf_sub_c"/>
</dbReference>
<dbReference type="InterPro" id="IPR003837">
    <property type="entry name" value="GatC"/>
</dbReference>
<dbReference type="NCBIfam" id="TIGR00135">
    <property type="entry name" value="gatC"/>
    <property type="match status" value="1"/>
</dbReference>
<dbReference type="PANTHER" id="PTHR15004">
    <property type="entry name" value="GLUTAMYL-TRNA(GLN) AMIDOTRANSFERASE SUBUNIT C, MITOCHONDRIAL"/>
    <property type="match status" value="1"/>
</dbReference>
<dbReference type="PANTHER" id="PTHR15004:SF0">
    <property type="entry name" value="GLUTAMYL-TRNA(GLN) AMIDOTRANSFERASE SUBUNIT C, MITOCHONDRIAL"/>
    <property type="match status" value="1"/>
</dbReference>
<dbReference type="Pfam" id="PF02686">
    <property type="entry name" value="GatC"/>
    <property type="match status" value="1"/>
</dbReference>
<dbReference type="SUPFAM" id="SSF141000">
    <property type="entry name" value="Glu-tRNAGln amidotransferase C subunit"/>
    <property type="match status" value="1"/>
</dbReference>
<proteinExistence type="inferred from homology"/>
<protein>
    <recommendedName>
        <fullName evidence="1">Aspartyl/glutamyl-tRNA(Asn/Gln) amidotransferase subunit C</fullName>
        <shortName evidence="1">Asp/Glu-ADT subunit C</shortName>
        <ecNumber evidence="1">6.3.5.-</ecNumber>
    </recommendedName>
</protein>
<evidence type="ECO:0000255" key="1">
    <source>
        <dbReference type="HAMAP-Rule" id="MF_00122"/>
    </source>
</evidence>
<keyword id="KW-0067">ATP-binding</keyword>
<keyword id="KW-0436">Ligase</keyword>
<keyword id="KW-0547">Nucleotide-binding</keyword>
<keyword id="KW-0648">Protein biosynthesis</keyword>
<name>GATC_BACHK</name>
<organism>
    <name type="scientific">Bacillus thuringiensis subsp. konkukian (strain 97-27)</name>
    <dbReference type="NCBI Taxonomy" id="281309"/>
    <lineage>
        <taxon>Bacteria</taxon>
        <taxon>Bacillati</taxon>
        <taxon>Bacillota</taxon>
        <taxon>Bacilli</taxon>
        <taxon>Bacillales</taxon>
        <taxon>Bacillaceae</taxon>
        <taxon>Bacillus</taxon>
        <taxon>Bacillus cereus group</taxon>
    </lineage>
</organism>
<feature type="chain" id="PRO_1000016070" description="Aspartyl/glutamyl-tRNA(Asn/Gln) amidotransferase subunit C">
    <location>
        <begin position="1"/>
        <end position="96"/>
    </location>
</feature>
<accession>Q6HP82</accession>